<name>CHI2_TOBAC</name>
<dbReference type="EC" id="3.2.1.14"/>
<dbReference type="EMBL" id="X51599">
    <property type="protein sequence ID" value="CAA35945.1"/>
    <property type="molecule type" value="Genomic_DNA"/>
</dbReference>
<dbReference type="EMBL" id="X64519">
    <property type="protein sequence ID" value="CAA45822.1"/>
    <property type="molecule type" value="Genomic_DNA"/>
</dbReference>
<dbReference type="EMBL" id="M15173">
    <property type="protein sequence ID" value="AAA34070.1"/>
    <property type="molecule type" value="mRNA"/>
</dbReference>
<dbReference type="PIR" id="S20981">
    <property type="entry name" value="S20981"/>
</dbReference>
<dbReference type="RefSeq" id="XP_016509308.1">
    <property type="nucleotide sequence ID" value="XM_016653822.1"/>
</dbReference>
<dbReference type="SMR" id="P24091"/>
<dbReference type="STRING" id="4097.P24091"/>
<dbReference type="CAZy" id="CBM18">
    <property type="family name" value="Carbohydrate-Binding Module Family 18"/>
</dbReference>
<dbReference type="CAZy" id="GH19">
    <property type="family name" value="Glycoside Hydrolase Family 19"/>
</dbReference>
<dbReference type="PaxDb" id="4097-P24091"/>
<dbReference type="KEGG" id="nta:107826794"/>
<dbReference type="OMA" id="PARNIMD"/>
<dbReference type="OrthoDB" id="5985073at2759"/>
<dbReference type="PhylomeDB" id="P24091"/>
<dbReference type="Proteomes" id="UP000084051">
    <property type="component" value="Unplaced"/>
</dbReference>
<dbReference type="GO" id="GO:0005773">
    <property type="term" value="C:vacuole"/>
    <property type="evidence" value="ECO:0007669"/>
    <property type="project" value="UniProtKB-SubCell"/>
</dbReference>
<dbReference type="GO" id="GO:0008061">
    <property type="term" value="F:chitin binding"/>
    <property type="evidence" value="ECO:0007669"/>
    <property type="project" value="UniProtKB-KW"/>
</dbReference>
<dbReference type="GO" id="GO:0004568">
    <property type="term" value="F:chitinase activity"/>
    <property type="evidence" value="ECO:0000318"/>
    <property type="project" value="GO_Central"/>
</dbReference>
<dbReference type="GO" id="GO:0008843">
    <property type="term" value="F:endochitinase activity"/>
    <property type="evidence" value="ECO:0007669"/>
    <property type="project" value="UniProtKB-EC"/>
</dbReference>
<dbReference type="GO" id="GO:0016998">
    <property type="term" value="P:cell wall macromolecule catabolic process"/>
    <property type="evidence" value="ECO:0007669"/>
    <property type="project" value="InterPro"/>
</dbReference>
<dbReference type="GO" id="GO:0006032">
    <property type="term" value="P:chitin catabolic process"/>
    <property type="evidence" value="ECO:0007669"/>
    <property type="project" value="UniProtKB-KW"/>
</dbReference>
<dbReference type="GO" id="GO:0009626">
    <property type="term" value="P:plant-type hypersensitive response"/>
    <property type="evidence" value="ECO:0007669"/>
    <property type="project" value="UniProtKB-KW"/>
</dbReference>
<dbReference type="GO" id="GO:0000272">
    <property type="term" value="P:polysaccharide catabolic process"/>
    <property type="evidence" value="ECO:0007669"/>
    <property type="project" value="UniProtKB-KW"/>
</dbReference>
<dbReference type="CDD" id="cd00325">
    <property type="entry name" value="chitinase_GH19"/>
    <property type="match status" value="1"/>
</dbReference>
<dbReference type="CDD" id="cd06921">
    <property type="entry name" value="ChtBD1_GH19_hevein"/>
    <property type="match status" value="1"/>
</dbReference>
<dbReference type="FunFam" id="3.30.60.10:FF:000001">
    <property type="entry name" value="Basic endochitinase"/>
    <property type="match status" value="1"/>
</dbReference>
<dbReference type="FunFam" id="3.30.20.10:FF:000001">
    <property type="entry name" value="Endochitinase (Chitinase)"/>
    <property type="match status" value="1"/>
</dbReference>
<dbReference type="Gene3D" id="1.10.530.10">
    <property type="match status" value="1"/>
</dbReference>
<dbReference type="Gene3D" id="3.30.20.10">
    <property type="entry name" value="Endochitinase, domain 2"/>
    <property type="match status" value="1"/>
</dbReference>
<dbReference type="Gene3D" id="3.30.60.10">
    <property type="entry name" value="Endochitinase-like"/>
    <property type="match status" value="1"/>
</dbReference>
<dbReference type="InterPro" id="IPR001002">
    <property type="entry name" value="Chitin-bd_1"/>
</dbReference>
<dbReference type="InterPro" id="IPR018371">
    <property type="entry name" value="Chitin-binding_1_CS"/>
</dbReference>
<dbReference type="InterPro" id="IPR036861">
    <property type="entry name" value="Endochitinase-like_sf"/>
</dbReference>
<dbReference type="InterPro" id="IPR016283">
    <property type="entry name" value="Glyco_hydro_19"/>
</dbReference>
<dbReference type="InterPro" id="IPR000726">
    <property type="entry name" value="Glyco_hydro_19_cat"/>
</dbReference>
<dbReference type="InterPro" id="IPR023346">
    <property type="entry name" value="Lysozyme-like_dom_sf"/>
</dbReference>
<dbReference type="PANTHER" id="PTHR22595">
    <property type="entry name" value="CHITINASE-RELATED"/>
    <property type="match status" value="1"/>
</dbReference>
<dbReference type="PANTHER" id="PTHR22595:SF184">
    <property type="entry name" value="ENDOCHITINASE A"/>
    <property type="match status" value="1"/>
</dbReference>
<dbReference type="Pfam" id="PF00187">
    <property type="entry name" value="Chitin_bind_1"/>
    <property type="match status" value="1"/>
</dbReference>
<dbReference type="Pfam" id="PF00182">
    <property type="entry name" value="Glyco_hydro_19"/>
    <property type="match status" value="1"/>
</dbReference>
<dbReference type="PIRSF" id="PIRSF001060">
    <property type="entry name" value="Endochitinase"/>
    <property type="match status" value="1"/>
</dbReference>
<dbReference type="PRINTS" id="PR00451">
    <property type="entry name" value="CHITINBINDNG"/>
</dbReference>
<dbReference type="SMART" id="SM00270">
    <property type="entry name" value="ChtBD1"/>
    <property type="match status" value="1"/>
</dbReference>
<dbReference type="SUPFAM" id="SSF53955">
    <property type="entry name" value="Lysozyme-like"/>
    <property type="match status" value="1"/>
</dbReference>
<dbReference type="SUPFAM" id="SSF57016">
    <property type="entry name" value="Plant lectins/antimicrobial peptides"/>
    <property type="match status" value="1"/>
</dbReference>
<dbReference type="PROSITE" id="PS00026">
    <property type="entry name" value="CHIT_BIND_I_1"/>
    <property type="match status" value="1"/>
</dbReference>
<dbReference type="PROSITE" id="PS50941">
    <property type="entry name" value="CHIT_BIND_I_2"/>
    <property type="match status" value="1"/>
</dbReference>
<dbReference type="PROSITE" id="PS00773">
    <property type="entry name" value="CHITINASE_19_1"/>
    <property type="match status" value="1"/>
</dbReference>
<dbReference type="PROSITE" id="PS00774">
    <property type="entry name" value="CHITINASE_19_2"/>
    <property type="match status" value="1"/>
</dbReference>
<feature type="signal peptide" evidence="4">
    <location>
        <begin position="1"/>
        <end position="23"/>
    </location>
</feature>
<feature type="chain" id="PRO_0000005332" description="Endochitinase B">
    <location>
        <begin position="24"/>
        <end position="317"/>
    </location>
</feature>
<feature type="propeptide" id="PRO_0000005333" description="Removed in mature form" evidence="6">
    <location>
        <begin position="318"/>
        <end position="324"/>
    </location>
</feature>
<feature type="domain" description="Chitin-binding type-1" evidence="2">
    <location>
        <begin position="24"/>
        <end position="65"/>
    </location>
</feature>
<feature type="active site" description="Proton donor" evidence="1">
    <location>
        <position position="140"/>
    </location>
</feature>
<feature type="modified residue" description="4-hydroxyproline" evidence="3">
    <location>
        <position position="67"/>
    </location>
</feature>
<feature type="modified residue" description="4-hydroxyproline" evidence="3">
    <location>
        <position position="69"/>
    </location>
</feature>
<feature type="disulfide bond" evidence="2">
    <location>
        <begin position="26"/>
        <end position="41"/>
    </location>
</feature>
<feature type="disulfide bond" evidence="2">
    <location>
        <begin position="35"/>
        <end position="47"/>
    </location>
</feature>
<feature type="disulfide bond" evidence="2">
    <location>
        <begin position="40"/>
        <end position="54"/>
    </location>
</feature>
<feature type="disulfide bond" evidence="2">
    <location>
        <begin position="59"/>
        <end position="63"/>
    </location>
</feature>
<feature type="disulfide bond" evidence="2">
    <location>
        <begin position="96"/>
        <end position="158"/>
    </location>
</feature>
<feature type="disulfide bond" evidence="2">
    <location>
        <begin position="170"/>
        <end position="178"/>
    </location>
</feature>
<feature type="disulfide bond" evidence="2">
    <location>
        <begin position="277"/>
        <end position="309"/>
    </location>
</feature>
<evidence type="ECO:0000250" key="1">
    <source>
        <dbReference type="UniProtKB" id="P29022"/>
    </source>
</evidence>
<evidence type="ECO:0000255" key="2">
    <source>
        <dbReference type="PROSITE-ProRule" id="PRU00261"/>
    </source>
</evidence>
<evidence type="ECO:0000269" key="3">
    <source>
    </source>
</evidence>
<evidence type="ECO:0000269" key="4">
    <source>
    </source>
</evidence>
<evidence type="ECO:0000269" key="5">
    <source>
    </source>
</evidence>
<evidence type="ECO:0000305" key="6"/>
<proteinExistence type="evidence at protein level"/>
<comment type="function">
    <text>Defense against chitin-containing fungal pathogens.</text>
</comment>
<comment type="catalytic activity">
    <reaction>
        <text>Random endo-hydrolysis of N-acetyl-beta-D-glucosaminide (1-&gt;4)-beta-linkages in chitin and chitodextrins.</text>
        <dbReference type="EC" id="3.2.1.14"/>
    </reaction>
</comment>
<comment type="subcellular location">
    <subcellularLocation>
        <location evidence="5">Vacuole</location>
    </subcellularLocation>
    <text>Vacuolar and protoplast.</text>
</comment>
<comment type="induction">
    <text>By ethylene.</text>
</comment>
<comment type="PTM">
    <text>The 4-hydroxyproline residues are not glycosylated in this plant vacuolar protein.</text>
</comment>
<comment type="similarity">
    <text evidence="6">Belongs to the glycosyl hydrolase 19 family. Chitinase class I subfamily.</text>
</comment>
<accession>P24091</accession>
<keyword id="KW-0119">Carbohydrate metabolism</keyword>
<keyword id="KW-0146">Chitin degradation</keyword>
<keyword id="KW-0147">Chitin-binding</keyword>
<keyword id="KW-0903">Direct protein sequencing</keyword>
<keyword id="KW-1015">Disulfide bond</keyword>
<keyword id="KW-0326">Glycosidase</keyword>
<keyword id="KW-0378">Hydrolase</keyword>
<keyword id="KW-0379">Hydroxylation</keyword>
<keyword id="KW-0381">Hypersensitive response</keyword>
<keyword id="KW-0568">Pathogenesis-related protein</keyword>
<keyword id="KW-0611">Plant defense</keyword>
<keyword id="KW-0624">Polysaccharide degradation</keyword>
<keyword id="KW-1185">Reference proteome</keyword>
<keyword id="KW-0732">Signal</keyword>
<keyword id="KW-0926">Vacuole</keyword>
<reference key="1">
    <citation type="journal article" date="1991" name="Plant Mol. Biol.">
        <title>Gene structure and expression of a tobacco endochitinase gene in suspension-cultured tobacco cells.</title>
        <authorList>
            <person name="Fukuda Y."/>
            <person name="Ohme M."/>
            <person name="Shinshi H."/>
        </authorList>
    </citation>
    <scope>NUCLEOTIDE SEQUENCE [GENOMIC DNA]</scope>
    <source>
        <strain>cv. Bright Yellow 4</strain>
        <tissue>Leaf</tissue>
    </source>
</reference>
<reference key="2">
    <citation type="journal article" date="1992" name="Mol. Gen. Genet.">
        <title>The structure and regulation of homeologous tobacco endochitinase genes of Nicotiana sylvestris and N. tomentosiformis origin.</title>
        <authorList>
            <person name="van Buuren M."/>
            <person name="Neuhaus J.-M."/>
            <person name="Shinshi H."/>
            <person name="Ryals J."/>
            <person name="Meins F. Jr."/>
        </authorList>
    </citation>
    <scope>NUCLEOTIDE SEQUENCE [GENOMIC DNA]</scope>
    <source>
        <strain>cv. Havana 425</strain>
        <tissue>Leaf</tissue>
    </source>
</reference>
<reference key="3">
    <citation type="journal article" date="1987" name="Proc. Natl. Acad. Sci. U.S.A.">
        <title>Regulation of a plant pathogenesis-related enzyme: inhibition of chitinase and chitinase mRNA accumulation in cultured tobacco tissues by auxin and cytokinin.</title>
        <authorList>
            <person name="Shinshi H."/>
            <person name="Mohnen D."/>
            <person name="Meins F. Jr."/>
        </authorList>
    </citation>
    <scope>NUCLEOTIDE SEQUENCE OF 15-324</scope>
    <scope>PROTEIN SEQUENCE OF 24-53</scope>
    <source>
        <strain>cv. Havana</strain>
    </source>
</reference>
<reference key="4">
    <citation type="journal article" date="1991" name="Proc. Natl. Acad. Sci. U.S.A.">
        <title>A short C-terminal sequence is necessary and sufficient for the targeting of chitinases to the plant vacuole.</title>
        <authorList>
            <person name="Neuhaus J.-M."/>
            <person name="Sticher L."/>
            <person name="Meins F. Jr."/>
            <person name="Boller T."/>
        </authorList>
    </citation>
    <scope>SUBCELLULAR LOCATION</scope>
</reference>
<reference key="5">
    <citation type="journal article" date="1992" name="Science">
        <title>Vacuolar chitinases of tobacco: a new class of hydroxyproline-containing proteins.</title>
        <authorList>
            <person name="Sticher L."/>
            <person name="Hofsteenge J."/>
            <person name="Milani A."/>
            <person name="Neuhaus J.-M."/>
            <person name="Meins F. Jr."/>
        </authorList>
    </citation>
    <scope>HYDROXYLATION AT PRO-67 AND PRO-69</scope>
    <scope>IDENTIFICATION BY MASS SPECTROMETRY</scope>
</reference>
<sequence length="324" mass="34721">MRLREFTALSSLLFSLLLLSASAEQCGSQAGGARCASGLCCSKFGWCGNTNDYCGPGNCQSQCPGGPTPPGGGDLGSIISSSMFDQMLKHRNDNACQGKGFYSYNAFINAARSFPGFGTSGDTTARKREIAAFFAQTSHETTGGWATAPDGPYAWGYCWLREQGSPGDYCTPSGQWPCAPGRKYFGRGPIQISHNYNYGPCGRAIGVDLLNNPDLVATDPVISFKSALWFWMTPQSPKPSCHDVIIGRWQPSSADRAANRLPGFGVITNIINGGLECGRGTDSRVQDRIGFYRRYCSILGVSPGDNLDCGNQRSFGNGLLVDTM</sequence>
<protein>
    <recommendedName>
        <fullName>Endochitinase B</fullName>
        <shortName>CHN-B</shortName>
        <ecNumber>3.2.1.14</ecNumber>
    </recommendedName>
</protein>
<gene>
    <name type="primary">CHN50</name>
</gene>
<organism>
    <name type="scientific">Nicotiana tabacum</name>
    <name type="common">Common tobacco</name>
    <dbReference type="NCBI Taxonomy" id="4097"/>
    <lineage>
        <taxon>Eukaryota</taxon>
        <taxon>Viridiplantae</taxon>
        <taxon>Streptophyta</taxon>
        <taxon>Embryophyta</taxon>
        <taxon>Tracheophyta</taxon>
        <taxon>Spermatophyta</taxon>
        <taxon>Magnoliopsida</taxon>
        <taxon>eudicotyledons</taxon>
        <taxon>Gunneridae</taxon>
        <taxon>Pentapetalae</taxon>
        <taxon>asterids</taxon>
        <taxon>lamiids</taxon>
        <taxon>Solanales</taxon>
        <taxon>Solanaceae</taxon>
        <taxon>Nicotianoideae</taxon>
        <taxon>Nicotianeae</taxon>
        <taxon>Nicotiana</taxon>
    </lineage>
</organism>